<sequence>MSQEFLARILEQKAREVEQMKLEQIQPLRQTYRLAEFLKNHQDRLQVIAEVKKASPSLGDINLDVDIVQQAQTYEENGAVMISVLTDEVFFKGHLDYLREISSQVEIPTLNKDFIIDEKQIIRARNAGATVILLIVAALSEERLKELYDYATELGLEVLVETHNLAELEVAHRLGAEIIGVNNRNLTTFEVDLQTSVDLAPYFEEGRYYISESAIFTGQDAERLAPYFNGILVGTALMQAENVAQRIKELQIDKG</sequence>
<dbReference type="EC" id="4.1.1.48" evidence="1"/>
<dbReference type="EMBL" id="CP001033">
    <property type="protein sequence ID" value="ACB91050.1"/>
    <property type="molecule type" value="Genomic_DNA"/>
</dbReference>
<dbReference type="RefSeq" id="WP_000076548.1">
    <property type="nucleotide sequence ID" value="NC_010582.1"/>
</dbReference>
<dbReference type="SMR" id="B2ISS3"/>
<dbReference type="KEGG" id="spw:SPCG_1798"/>
<dbReference type="HOGENOM" id="CLU_034247_2_1_9"/>
<dbReference type="UniPathway" id="UPA00035">
    <property type="reaction ID" value="UER00043"/>
</dbReference>
<dbReference type="GO" id="GO:0004425">
    <property type="term" value="F:indole-3-glycerol-phosphate synthase activity"/>
    <property type="evidence" value="ECO:0007669"/>
    <property type="project" value="UniProtKB-UniRule"/>
</dbReference>
<dbReference type="GO" id="GO:0004640">
    <property type="term" value="F:phosphoribosylanthranilate isomerase activity"/>
    <property type="evidence" value="ECO:0007669"/>
    <property type="project" value="TreeGrafter"/>
</dbReference>
<dbReference type="GO" id="GO:0000162">
    <property type="term" value="P:L-tryptophan biosynthetic process"/>
    <property type="evidence" value="ECO:0007669"/>
    <property type="project" value="UniProtKB-UniRule"/>
</dbReference>
<dbReference type="CDD" id="cd00331">
    <property type="entry name" value="IGPS"/>
    <property type="match status" value="1"/>
</dbReference>
<dbReference type="FunFam" id="3.20.20.70:FF:000024">
    <property type="entry name" value="Indole-3-glycerol phosphate synthase"/>
    <property type="match status" value="1"/>
</dbReference>
<dbReference type="Gene3D" id="3.20.20.70">
    <property type="entry name" value="Aldolase class I"/>
    <property type="match status" value="1"/>
</dbReference>
<dbReference type="HAMAP" id="MF_00134_B">
    <property type="entry name" value="IGPS_B"/>
    <property type="match status" value="1"/>
</dbReference>
<dbReference type="InterPro" id="IPR013785">
    <property type="entry name" value="Aldolase_TIM"/>
</dbReference>
<dbReference type="InterPro" id="IPR045186">
    <property type="entry name" value="Indole-3-glycerol_P_synth"/>
</dbReference>
<dbReference type="InterPro" id="IPR013798">
    <property type="entry name" value="Indole-3-glycerol_P_synth_dom"/>
</dbReference>
<dbReference type="InterPro" id="IPR001468">
    <property type="entry name" value="Indole-3-GlycerolPSynthase_CS"/>
</dbReference>
<dbReference type="InterPro" id="IPR011060">
    <property type="entry name" value="RibuloseP-bd_barrel"/>
</dbReference>
<dbReference type="NCBIfam" id="NF001371">
    <property type="entry name" value="PRK00278.1-3"/>
    <property type="match status" value="1"/>
</dbReference>
<dbReference type="NCBIfam" id="NF001377">
    <property type="entry name" value="PRK00278.2-4"/>
    <property type="match status" value="1"/>
</dbReference>
<dbReference type="PANTHER" id="PTHR22854:SF2">
    <property type="entry name" value="INDOLE-3-GLYCEROL-PHOSPHATE SYNTHASE"/>
    <property type="match status" value="1"/>
</dbReference>
<dbReference type="PANTHER" id="PTHR22854">
    <property type="entry name" value="TRYPTOPHAN BIOSYNTHESIS PROTEIN"/>
    <property type="match status" value="1"/>
</dbReference>
<dbReference type="Pfam" id="PF00218">
    <property type="entry name" value="IGPS"/>
    <property type="match status" value="1"/>
</dbReference>
<dbReference type="SUPFAM" id="SSF51366">
    <property type="entry name" value="Ribulose-phoshate binding barrel"/>
    <property type="match status" value="1"/>
</dbReference>
<dbReference type="PROSITE" id="PS00614">
    <property type="entry name" value="IGPS"/>
    <property type="match status" value="1"/>
</dbReference>
<reference key="1">
    <citation type="journal article" date="2009" name="BMC Genomics">
        <title>Genome evolution driven by host adaptations results in a more virulent and antimicrobial-resistant Streptococcus pneumoniae serotype 14.</title>
        <authorList>
            <person name="Ding F."/>
            <person name="Tang P."/>
            <person name="Hsu M.-H."/>
            <person name="Cui P."/>
            <person name="Hu S."/>
            <person name="Yu J."/>
            <person name="Chiu C.-H."/>
        </authorList>
    </citation>
    <scope>NUCLEOTIDE SEQUENCE [LARGE SCALE GENOMIC DNA]</scope>
    <source>
        <strain>CGSP14</strain>
    </source>
</reference>
<proteinExistence type="inferred from homology"/>
<keyword id="KW-0028">Amino-acid biosynthesis</keyword>
<keyword id="KW-0057">Aromatic amino acid biosynthesis</keyword>
<keyword id="KW-0210">Decarboxylase</keyword>
<keyword id="KW-0456">Lyase</keyword>
<keyword id="KW-0822">Tryptophan biosynthesis</keyword>
<accession>B2ISS3</accession>
<feature type="chain" id="PRO_1000095899" description="Indole-3-glycerol phosphate synthase">
    <location>
        <begin position="1"/>
        <end position="255"/>
    </location>
</feature>
<protein>
    <recommendedName>
        <fullName evidence="1">Indole-3-glycerol phosphate synthase</fullName>
        <shortName evidence="1">IGPS</shortName>
        <ecNumber evidence="1">4.1.1.48</ecNumber>
    </recommendedName>
</protein>
<gene>
    <name evidence="1" type="primary">trpC</name>
    <name type="ordered locus">SPCG_1798</name>
</gene>
<organism>
    <name type="scientific">Streptococcus pneumoniae (strain CGSP14)</name>
    <dbReference type="NCBI Taxonomy" id="516950"/>
    <lineage>
        <taxon>Bacteria</taxon>
        <taxon>Bacillati</taxon>
        <taxon>Bacillota</taxon>
        <taxon>Bacilli</taxon>
        <taxon>Lactobacillales</taxon>
        <taxon>Streptococcaceae</taxon>
        <taxon>Streptococcus</taxon>
    </lineage>
</organism>
<comment type="catalytic activity">
    <reaction evidence="1">
        <text>1-(2-carboxyphenylamino)-1-deoxy-D-ribulose 5-phosphate + H(+) = (1S,2R)-1-C-(indol-3-yl)glycerol 3-phosphate + CO2 + H2O</text>
        <dbReference type="Rhea" id="RHEA:23476"/>
        <dbReference type="ChEBI" id="CHEBI:15377"/>
        <dbReference type="ChEBI" id="CHEBI:15378"/>
        <dbReference type="ChEBI" id="CHEBI:16526"/>
        <dbReference type="ChEBI" id="CHEBI:58613"/>
        <dbReference type="ChEBI" id="CHEBI:58866"/>
        <dbReference type="EC" id="4.1.1.48"/>
    </reaction>
</comment>
<comment type="pathway">
    <text evidence="1">Amino-acid biosynthesis; L-tryptophan biosynthesis; L-tryptophan from chorismate: step 4/5.</text>
</comment>
<comment type="similarity">
    <text evidence="1">Belongs to the TrpC family.</text>
</comment>
<evidence type="ECO:0000255" key="1">
    <source>
        <dbReference type="HAMAP-Rule" id="MF_00134"/>
    </source>
</evidence>
<name>TRPC_STRPS</name>